<organismHost>
    <name type="scientific">Homo sapiens</name>
    <name type="common">Human</name>
    <dbReference type="NCBI Taxonomy" id="9606"/>
</organismHost>
<feature type="chain" id="PRO_0000115829" description="mRNA export factor ICP27 homolog">
    <location>
        <begin position="1"/>
        <end position="516"/>
    </location>
</feature>
<feature type="zinc finger region" description="CHC2-type" evidence="2">
    <location>
        <begin position="231"/>
        <end position="343"/>
    </location>
</feature>
<feature type="region of interest" description="Disordered" evidence="3">
    <location>
        <begin position="399"/>
        <end position="423"/>
    </location>
</feature>
<feature type="compositionally biased region" description="Polar residues" evidence="3">
    <location>
        <begin position="399"/>
        <end position="409"/>
    </location>
</feature>
<feature type="binding site" evidence="2">
    <location>
        <position position="231"/>
    </location>
    <ligand>
        <name>Zn(2+)</name>
        <dbReference type="ChEBI" id="CHEBI:29105"/>
    </ligand>
</feature>
<feature type="binding site" evidence="2">
    <location>
        <position position="336"/>
    </location>
    <ligand>
        <name>Zn(2+)</name>
        <dbReference type="ChEBI" id="CHEBI:29105"/>
    </ligand>
</feature>
<feature type="binding site" evidence="2">
    <location>
        <position position="338"/>
    </location>
    <ligand>
        <name>Zn(2+)</name>
        <dbReference type="ChEBI" id="CHEBI:29105"/>
    </ligand>
</feature>
<feature type="binding site" evidence="2">
    <location>
        <position position="343"/>
    </location>
    <ligand>
        <name>Zn(2+)</name>
        <dbReference type="ChEBI" id="CHEBI:29105"/>
    </ligand>
</feature>
<name>ICP27_HHV6Z</name>
<protein>
    <recommendedName>
        <fullName>mRNA export factor ICP27 homolog</fullName>
    </recommendedName>
</protein>
<evidence type="ECO:0000250" key="1"/>
<evidence type="ECO:0000250" key="2">
    <source>
        <dbReference type="UniProtKB" id="P10238"/>
    </source>
</evidence>
<evidence type="ECO:0000256" key="3">
    <source>
        <dbReference type="SAM" id="MobiDB-lite"/>
    </source>
</evidence>
<evidence type="ECO:0000305" key="4"/>
<proteinExistence type="inferred from homology"/>
<dbReference type="EMBL" id="AF157706">
    <property type="protein sequence ID" value="AAB06340.1"/>
    <property type="molecule type" value="Genomic_DNA"/>
</dbReference>
<dbReference type="PIR" id="T44002">
    <property type="entry name" value="T44002"/>
</dbReference>
<dbReference type="RefSeq" id="NP_050223.1">
    <property type="nucleotide sequence ID" value="NC_000898.1"/>
</dbReference>
<dbReference type="DNASU" id="1497044"/>
<dbReference type="GeneID" id="1497044"/>
<dbReference type="KEGG" id="vg:1497044"/>
<dbReference type="Proteomes" id="UP000006930">
    <property type="component" value="Segment"/>
</dbReference>
<dbReference type="GO" id="GO:0030430">
    <property type="term" value="C:host cell cytoplasm"/>
    <property type="evidence" value="ECO:0007669"/>
    <property type="project" value="UniProtKB-SubCell"/>
</dbReference>
<dbReference type="GO" id="GO:0042025">
    <property type="term" value="C:host cell nucleus"/>
    <property type="evidence" value="ECO:0007669"/>
    <property type="project" value="UniProtKB-SubCell"/>
</dbReference>
<dbReference type="GO" id="GO:0019033">
    <property type="term" value="C:viral tegument"/>
    <property type="evidence" value="ECO:0007669"/>
    <property type="project" value="UniProtKB-SubCell"/>
</dbReference>
<dbReference type="GO" id="GO:0008270">
    <property type="term" value="F:zinc ion binding"/>
    <property type="evidence" value="ECO:0007669"/>
    <property type="project" value="UniProtKB-KW"/>
</dbReference>
<dbReference type="GO" id="GO:0006355">
    <property type="term" value="P:regulation of DNA-templated transcription"/>
    <property type="evidence" value="ECO:0007669"/>
    <property type="project" value="InterPro"/>
</dbReference>
<dbReference type="InterPro" id="IPR008648">
    <property type="entry name" value="ICP27-like"/>
</dbReference>
<dbReference type="Pfam" id="PF05459">
    <property type="entry name" value="Herpes_UL69"/>
    <property type="match status" value="1"/>
</dbReference>
<comment type="function">
    <text evidence="1">Immediate early (EI) protein that plays many roles during productive infection including regulation of viral gene expression and nuclear export of intronless viral RNAs.</text>
</comment>
<comment type="subcellular location">
    <subcellularLocation>
        <location evidence="1">Virion tegument</location>
    </subcellularLocation>
    <subcellularLocation>
        <location evidence="1">Virion</location>
    </subcellularLocation>
    <subcellularLocation>
        <location>Host nucleus</location>
    </subcellularLocation>
    <subcellularLocation>
        <location>Host cytoplasm</location>
    </subcellularLocation>
    <text>Shuttles between host nucleus and cytoplasm.</text>
</comment>
<comment type="similarity">
    <text evidence="4">Belongs to the HHV-1 ICP27 protein family.</text>
</comment>
<reference key="1">
    <citation type="journal article" date="1995" name="J. Virol.">
        <title>Intragenomic linear amplification of human herpesvirus 6B oriLyt suggests acquisition of oriLyt by transposition.</title>
        <authorList>
            <person name="Stamey F.R."/>
            <person name="Dominguez G."/>
            <person name="Black J.B."/>
            <person name="Dambaugh T.R."/>
            <person name="Pellett P.E."/>
        </authorList>
    </citation>
    <scope>NUCLEOTIDE SEQUENCE [GENOMIC DNA]</scope>
</reference>
<reference key="2">
    <citation type="journal article" date="1999" name="J. Virol.">
        <title>Human herpesvirus 6B genome sequence: coding content and comparison with human herpesvirus 6A.</title>
        <authorList>
            <person name="Dominguez G."/>
            <person name="Dambaugh T.R."/>
            <person name="Stamey F.R."/>
            <person name="Dewhurst S."/>
            <person name="Inoue N."/>
            <person name="Pellett P.E."/>
        </authorList>
    </citation>
    <scope>NUCLEOTIDE SEQUENCE [LARGE SCALE GENOMIC DNA]</scope>
</reference>
<keyword id="KW-1035">Host cytoplasm</keyword>
<keyword id="KW-1048">Host nucleus</keyword>
<keyword id="KW-0479">Metal-binding</keyword>
<keyword id="KW-1185">Reference proteome</keyword>
<keyword id="KW-0804">Transcription</keyword>
<keyword id="KW-0805">Transcription regulation</keyword>
<keyword id="KW-0946">Virion</keyword>
<keyword id="KW-0920">Virion tegument</keyword>
<keyword id="KW-0862">Zinc</keyword>
<keyword id="KW-0863">Zinc-finger</keyword>
<sequence length="516" mass="60114">MYPRGVKRSQHDRHKQTAFRTIKRSITHRPTSKFISHFAKNFRGKLAPLKQLDESRLDALSLTELEQLKTIIEEKQQEKRAQNNAITFLPNLPTVPFADTNFSIKSLGLRPYNGDARDPKQRIRDRFPQTHERICLLTNDILETDLLLRYRQCLDSLTREENQQLMGDRIFSLTNSPCLAFTVATVEEACSYFKFHDLHNLPVNPQDLFMYTITVMKFEFFNKLNMAKLTCVFNDNGHGDIEYRKLRQLCGKPVLDREMPNSEFEVQQQTPDSFRHPIQQAMSIVVTFARILRQIKEHIIRTKKPQFIRDFDTERVAERYECGLISRLIGKQFSNHKCDDVSCQNRIERIMAPWKPSLFFCTYFAKDAPKFKLFPNLPHEYRNLSFTCPKVDMEPSCSYSTSRDLPQTSHRSHKNQGTPKVKSKVCVEKPDTSNLTTTKTTTEILIEESMETDNKIPDPRELNFNQAKQDEIVIININENVNSKHESESSVEMDLDLDYEADTCETNLNTYSSDSE</sequence>
<accession>P52539</accession>
<gene>
    <name type="ORF">KA3L</name>
    <name type="ORF">U42</name>
</gene>
<organism>
    <name type="scientific">Human herpesvirus 6B (strain Z29)</name>
    <name type="common">HHV-6 variant B</name>
    <name type="synonym">Human B lymphotropic virus</name>
    <dbReference type="NCBI Taxonomy" id="36351"/>
    <lineage>
        <taxon>Viruses</taxon>
        <taxon>Duplodnaviria</taxon>
        <taxon>Heunggongvirae</taxon>
        <taxon>Peploviricota</taxon>
        <taxon>Herviviricetes</taxon>
        <taxon>Herpesvirales</taxon>
        <taxon>Orthoherpesviridae</taxon>
        <taxon>Betaherpesvirinae</taxon>
        <taxon>Roseolovirus</taxon>
        <taxon>Roseolovirus humanbeta6b</taxon>
        <taxon>Human herpesvirus 6B</taxon>
    </lineage>
</organism>